<reference key="1">
    <citation type="journal article" date="2004" name="Nucleic Acids Res.">
        <title>Thermoadaptation trait revealed by the genome sequence of thermophilic Geobacillus kaustophilus.</title>
        <authorList>
            <person name="Takami H."/>
            <person name="Takaki Y."/>
            <person name="Chee G.-J."/>
            <person name="Nishi S."/>
            <person name="Shimamura S."/>
            <person name="Suzuki H."/>
            <person name="Matsui S."/>
            <person name="Uchiyama I."/>
        </authorList>
    </citation>
    <scope>NUCLEOTIDE SEQUENCE [LARGE SCALE GENOMIC DNA]</scope>
    <source>
        <strain>HTA426</strain>
    </source>
</reference>
<gene>
    <name type="ordered locus">GK1331</name>
</gene>
<name>Y1331_GEOKA</name>
<protein>
    <recommendedName>
        <fullName evidence="1">UPF0291 protein GK1331</fullName>
    </recommendedName>
</protein>
<accession>Q5L0C0</accession>
<proteinExistence type="inferred from homology"/>
<feature type="chain" id="PRO_0000094971" description="UPF0291 protein GK1331">
    <location>
        <begin position="1"/>
        <end position="76"/>
    </location>
</feature>
<feature type="region of interest" description="Disordered" evidence="2">
    <location>
        <begin position="57"/>
        <end position="76"/>
    </location>
</feature>
<feature type="compositionally biased region" description="Basic and acidic residues" evidence="2">
    <location>
        <begin position="63"/>
        <end position="76"/>
    </location>
</feature>
<dbReference type="EMBL" id="BA000043">
    <property type="protein sequence ID" value="BAD75616.1"/>
    <property type="molecule type" value="Genomic_DNA"/>
</dbReference>
<dbReference type="RefSeq" id="WP_011230830.1">
    <property type="nucleotide sequence ID" value="NC_006510.1"/>
</dbReference>
<dbReference type="SMR" id="Q5L0C0"/>
<dbReference type="STRING" id="235909.GK1331"/>
<dbReference type="KEGG" id="gka:GK1331"/>
<dbReference type="eggNOG" id="COG4224">
    <property type="taxonomic scope" value="Bacteria"/>
</dbReference>
<dbReference type="HOGENOM" id="CLU_173137_0_2_9"/>
<dbReference type="Proteomes" id="UP000001172">
    <property type="component" value="Chromosome"/>
</dbReference>
<dbReference type="GO" id="GO:0005737">
    <property type="term" value="C:cytoplasm"/>
    <property type="evidence" value="ECO:0007669"/>
    <property type="project" value="UniProtKB-SubCell"/>
</dbReference>
<dbReference type="Gene3D" id="1.10.287.540">
    <property type="entry name" value="Helix hairpin bin"/>
    <property type="match status" value="1"/>
</dbReference>
<dbReference type="HAMAP" id="MF_01103">
    <property type="entry name" value="UPF0291"/>
    <property type="match status" value="1"/>
</dbReference>
<dbReference type="InterPro" id="IPR009242">
    <property type="entry name" value="DUF896"/>
</dbReference>
<dbReference type="PANTHER" id="PTHR37300">
    <property type="entry name" value="UPF0291 PROTEIN CBO2609/CLC_2481"/>
    <property type="match status" value="1"/>
</dbReference>
<dbReference type="PANTHER" id="PTHR37300:SF1">
    <property type="entry name" value="UPF0291 PROTEIN YNZC"/>
    <property type="match status" value="1"/>
</dbReference>
<dbReference type="Pfam" id="PF05979">
    <property type="entry name" value="DUF896"/>
    <property type="match status" value="1"/>
</dbReference>
<dbReference type="SUPFAM" id="SSF158221">
    <property type="entry name" value="YnzC-like"/>
    <property type="match status" value="1"/>
</dbReference>
<sequence>MLAKHKLARINELAKKAKTAGLSAEEAFEQAKLRREYIQAFRKAMTDMLHTVTVIDPSGNDVTPKKLKESQRRRFH</sequence>
<keyword id="KW-0963">Cytoplasm</keyword>
<keyword id="KW-1185">Reference proteome</keyword>
<comment type="subcellular location">
    <subcellularLocation>
        <location evidence="1">Cytoplasm</location>
    </subcellularLocation>
</comment>
<comment type="similarity">
    <text evidence="1">Belongs to the UPF0291 family.</text>
</comment>
<evidence type="ECO:0000255" key="1">
    <source>
        <dbReference type="HAMAP-Rule" id="MF_01103"/>
    </source>
</evidence>
<evidence type="ECO:0000256" key="2">
    <source>
        <dbReference type="SAM" id="MobiDB-lite"/>
    </source>
</evidence>
<organism>
    <name type="scientific">Geobacillus kaustophilus (strain HTA426)</name>
    <dbReference type="NCBI Taxonomy" id="235909"/>
    <lineage>
        <taxon>Bacteria</taxon>
        <taxon>Bacillati</taxon>
        <taxon>Bacillota</taxon>
        <taxon>Bacilli</taxon>
        <taxon>Bacillales</taxon>
        <taxon>Anoxybacillaceae</taxon>
        <taxon>Geobacillus</taxon>
        <taxon>Geobacillus thermoleovorans group</taxon>
    </lineage>
</organism>